<feature type="chain" id="PRO_0000246823" description="7-cyano-7-deazaguanine synthase">
    <location>
        <begin position="1"/>
        <end position="224"/>
    </location>
</feature>
<feature type="binding site" evidence="1">
    <location>
        <begin position="9"/>
        <end position="19"/>
    </location>
    <ligand>
        <name>ATP</name>
        <dbReference type="ChEBI" id="CHEBI:30616"/>
    </ligand>
</feature>
<feature type="binding site" evidence="1">
    <location>
        <position position="190"/>
    </location>
    <ligand>
        <name>Zn(2+)</name>
        <dbReference type="ChEBI" id="CHEBI:29105"/>
    </ligand>
</feature>
<feature type="binding site" evidence="1">
    <location>
        <position position="198"/>
    </location>
    <ligand>
        <name>Zn(2+)</name>
        <dbReference type="ChEBI" id="CHEBI:29105"/>
    </ligand>
</feature>
<feature type="binding site" evidence="1">
    <location>
        <position position="201"/>
    </location>
    <ligand>
        <name>Zn(2+)</name>
        <dbReference type="ChEBI" id="CHEBI:29105"/>
    </ligand>
</feature>
<feature type="binding site" evidence="1">
    <location>
        <position position="204"/>
    </location>
    <ligand>
        <name>Zn(2+)</name>
        <dbReference type="ChEBI" id="CHEBI:29105"/>
    </ligand>
</feature>
<protein>
    <recommendedName>
        <fullName evidence="1">7-cyano-7-deazaguanine synthase</fullName>
        <ecNumber evidence="1">6.3.4.20</ecNumber>
    </recommendedName>
    <alternativeName>
        <fullName evidence="1">7-cyano-7-carbaguanine synthase</fullName>
    </alternativeName>
    <alternativeName>
        <fullName evidence="1">PreQ(0) synthase</fullName>
    </alternativeName>
    <alternativeName>
        <fullName evidence="1">Queuosine biosynthesis protein QueC</fullName>
    </alternativeName>
</protein>
<comment type="function">
    <text evidence="1">Catalyzes the ATP-dependent conversion of 7-carboxy-7-deazaguanine (CDG) to 7-cyano-7-deazaguanine (preQ(0)).</text>
</comment>
<comment type="catalytic activity">
    <reaction evidence="1">
        <text>7-carboxy-7-deazaguanine + NH4(+) + ATP = 7-cyano-7-deazaguanine + ADP + phosphate + H2O + H(+)</text>
        <dbReference type="Rhea" id="RHEA:27982"/>
        <dbReference type="ChEBI" id="CHEBI:15377"/>
        <dbReference type="ChEBI" id="CHEBI:15378"/>
        <dbReference type="ChEBI" id="CHEBI:28938"/>
        <dbReference type="ChEBI" id="CHEBI:30616"/>
        <dbReference type="ChEBI" id="CHEBI:43474"/>
        <dbReference type="ChEBI" id="CHEBI:45075"/>
        <dbReference type="ChEBI" id="CHEBI:61036"/>
        <dbReference type="ChEBI" id="CHEBI:456216"/>
        <dbReference type="EC" id="6.3.4.20"/>
    </reaction>
</comment>
<comment type="cofactor">
    <cofactor evidence="1">
        <name>Zn(2+)</name>
        <dbReference type="ChEBI" id="CHEBI:29105"/>
    </cofactor>
    <text evidence="1">Binds 1 zinc ion per subunit.</text>
</comment>
<comment type="pathway">
    <text evidence="1">Purine metabolism; 7-cyano-7-deazaguanine biosynthesis.</text>
</comment>
<comment type="similarity">
    <text evidence="1">Belongs to the QueC family.</text>
</comment>
<evidence type="ECO:0000255" key="1">
    <source>
        <dbReference type="HAMAP-Rule" id="MF_01633"/>
    </source>
</evidence>
<proteinExistence type="inferred from homology"/>
<gene>
    <name evidence="1" type="primary">queC</name>
    <name type="ordered locus">CJE0016</name>
</gene>
<sequence length="224" mass="25140">MSKKALCIISGGMDSTLCAYLAKKEGYEIIALHFDYEQRTQEKEKECFKQICKALKVEKSYILDVSFIKDIGGNALTDKSIDIPKNELCTSDTPPITYVPFRNGIFLSIAGSLAEKENCESIFIGVVEEDGSGYPDCTDEFIQKAQEFINEGTSKNFKVCIKTPLVRLNKAKIVELALKENVPLELTWSCYESEDEACGECDSCLLRLRGFEKAGFKDKIKYKS</sequence>
<dbReference type="EC" id="6.3.4.20" evidence="1"/>
<dbReference type="EMBL" id="CP000025">
    <property type="protein sequence ID" value="AAW34511.1"/>
    <property type="molecule type" value="Genomic_DNA"/>
</dbReference>
<dbReference type="RefSeq" id="WP_002779268.1">
    <property type="nucleotide sequence ID" value="NC_003912.7"/>
</dbReference>
<dbReference type="SMR" id="Q5HXE2"/>
<dbReference type="GeneID" id="66544985"/>
<dbReference type="KEGG" id="cjr:CJE0016"/>
<dbReference type="HOGENOM" id="CLU_081854_1_0_7"/>
<dbReference type="UniPathway" id="UPA00391"/>
<dbReference type="GO" id="GO:0005524">
    <property type="term" value="F:ATP binding"/>
    <property type="evidence" value="ECO:0007669"/>
    <property type="project" value="UniProtKB-UniRule"/>
</dbReference>
<dbReference type="GO" id="GO:0016879">
    <property type="term" value="F:ligase activity, forming carbon-nitrogen bonds"/>
    <property type="evidence" value="ECO:0007669"/>
    <property type="project" value="UniProtKB-UniRule"/>
</dbReference>
<dbReference type="GO" id="GO:0008270">
    <property type="term" value="F:zinc ion binding"/>
    <property type="evidence" value="ECO:0007669"/>
    <property type="project" value="UniProtKB-UniRule"/>
</dbReference>
<dbReference type="GO" id="GO:0008616">
    <property type="term" value="P:queuosine biosynthetic process"/>
    <property type="evidence" value="ECO:0007669"/>
    <property type="project" value="UniProtKB-UniRule"/>
</dbReference>
<dbReference type="CDD" id="cd01995">
    <property type="entry name" value="QueC-like"/>
    <property type="match status" value="1"/>
</dbReference>
<dbReference type="Gene3D" id="3.40.50.620">
    <property type="entry name" value="HUPs"/>
    <property type="match status" value="1"/>
</dbReference>
<dbReference type="HAMAP" id="MF_01633">
    <property type="entry name" value="QueC"/>
    <property type="match status" value="1"/>
</dbReference>
<dbReference type="InterPro" id="IPR018317">
    <property type="entry name" value="QueC"/>
</dbReference>
<dbReference type="InterPro" id="IPR014729">
    <property type="entry name" value="Rossmann-like_a/b/a_fold"/>
</dbReference>
<dbReference type="NCBIfam" id="TIGR00364">
    <property type="entry name" value="7-cyano-7-deazaguanine synthase QueC"/>
    <property type="match status" value="1"/>
</dbReference>
<dbReference type="PANTHER" id="PTHR42914">
    <property type="entry name" value="7-CYANO-7-DEAZAGUANINE SYNTHASE"/>
    <property type="match status" value="1"/>
</dbReference>
<dbReference type="PANTHER" id="PTHR42914:SF1">
    <property type="entry name" value="7-CYANO-7-DEAZAGUANINE SYNTHASE"/>
    <property type="match status" value="1"/>
</dbReference>
<dbReference type="Pfam" id="PF06508">
    <property type="entry name" value="QueC"/>
    <property type="match status" value="1"/>
</dbReference>
<dbReference type="PIRSF" id="PIRSF006293">
    <property type="entry name" value="ExsB"/>
    <property type="match status" value="1"/>
</dbReference>
<dbReference type="SUPFAM" id="SSF52402">
    <property type="entry name" value="Adenine nucleotide alpha hydrolases-like"/>
    <property type="match status" value="1"/>
</dbReference>
<organism>
    <name type="scientific">Campylobacter jejuni (strain RM1221)</name>
    <dbReference type="NCBI Taxonomy" id="195099"/>
    <lineage>
        <taxon>Bacteria</taxon>
        <taxon>Pseudomonadati</taxon>
        <taxon>Campylobacterota</taxon>
        <taxon>Epsilonproteobacteria</taxon>
        <taxon>Campylobacterales</taxon>
        <taxon>Campylobacteraceae</taxon>
        <taxon>Campylobacter</taxon>
    </lineage>
</organism>
<name>QUEC_CAMJR</name>
<reference key="1">
    <citation type="journal article" date="2005" name="PLoS Biol.">
        <title>Major structural differences and novel potential virulence mechanisms from the genomes of multiple Campylobacter species.</title>
        <authorList>
            <person name="Fouts D.E."/>
            <person name="Mongodin E.F."/>
            <person name="Mandrell R.E."/>
            <person name="Miller W.G."/>
            <person name="Rasko D.A."/>
            <person name="Ravel J."/>
            <person name="Brinkac L.M."/>
            <person name="DeBoy R.T."/>
            <person name="Parker C.T."/>
            <person name="Daugherty S.C."/>
            <person name="Dodson R.J."/>
            <person name="Durkin A.S."/>
            <person name="Madupu R."/>
            <person name="Sullivan S.A."/>
            <person name="Shetty J.U."/>
            <person name="Ayodeji M.A."/>
            <person name="Shvartsbeyn A."/>
            <person name="Schatz M.C."/>
            <person name="Badger J.H."/>
            <person name="Fraser C.M."/>
            <person name="Nelson K.E."/>
        </authorList>
    </citation>
    <scope>NUCLEOTIDE SEQUENCE [LARGE SCALE GENOMIC DNA]</scope>
    <source>
        <strain>RM1221</strain>
    </source>
</reference>
<accession>Q5HXE2</accession>
<keyword id="KW-0067">ATP-binding</keyword>
<keyword id="KW-0436">Ligase</keyword>
<keyword id="KW-0479">Metal-binding</keyword>
<keyword id="KW-0547">Nucleotide-binding</keyword>
<keyword id="KW-0671">Queuosine biosynthesis</keyword>
<keyword id="KW-0862">Zinc</keyword>